<organism>
    <name type="scientific">Oryza sativa subsp. indica</name>
    <name type="common">Rice</name>
    <dbReference type="NCBI Taxonomy" id="39946"/>
    <lineage>
        <taxon>Eukaryota</taxon>
        <taxon>Viridiplantae</taxon>
        <taxon>Streptophyta</taxon>
        <taxon>Embryophyta</taxon>
        <taxon>Tracheophyta</taxon>
        <taxon>Spermatophyta</taxon>
        <taxon>Magnoliopsida</taxon>
        <taxon>Liliopsida</taxon>
        <taxon>Poales</taxon>
        <taxon>Poaceae</taxon>
        <taxon>BOP clade</taxon>
        <taxon>Oryzoideae</taxon>
        <taxon>Oryzeae</taxon>
        <taxon>Oryzinae</taxon>
        <taxon>Oryza</taxon>
        <taxon>Oryza sativa</taxon>
    </lineage>
</organism>
<name>CGT_ORYSI</name>
<dbReference type="EC" id="2.4.1.360" evidence="3"/>
<dbReference type="EMBL" id="DQ352453">
    <property type="protein sequence ID" value="ABC94602.1"/>
    <property type="molecule type" value="Genomic_DNA"/>
</dbReference>
<dbReference type="EMBL" id="FM179712">
    <property type="protein sequence ID" value="CAQ77160.1"/>
    <property type="molecule type" value="Genomic_DNA"/>
</dbReference>
<dbReference type="SMR" id="C3W7B0"/>
<dbReference type="BioCyc" id="MetaCyc:MONOMER-15871"/>
<dbReference type="BRENDA" id="2.4.1.360">
    <property type="organism ID" value="11590"/>
</dbReference>
<dbReference type="GO" id="GO:0120514">
    <property type="term" value="F:2-hydroxyflavanone C-glucosyltransferase activity"/>
    <property type="evidence" value="ECO:0007669"/>
    <property type="project" value="UniProtKB-EC"/>
</dbReference>
<dbReference type="GO" id="GO:0035251">
    <property type="term" value="F:UDP-glucosyltransferase activity"/>
    <property type="evidence" value="ECO:0000314"/>
    <property type="project" value="UniProtKB"/>
</dbReference>
<dbReference type="CDD" id="cd03784">
    <property type="entry name" value="GT1_Gtf-like"/>
    <property type="match status" value="1"/>
</dbReference>
<dbReference type="FunFam" id="3.40.50.2000:FF:000124">
    <property type="entry name" value="Glycosyltransferase"/>
    <property type="match status" value="1"/>
</dbReference>
<dbReference type="FunFam" id="3.40.50.2000:FF:000127">
    <property type="entry name" value="Glycosyltransferase"/>
    <property type="match status" value="1"/>
</dbReference>
<dbReference type="Gene3D" id="3.40.50.2000">
    <property type="entry name" value="Glycogen Phosphorylase B"/>
    <property type="match status" value="2"/>
</dbReference>
<dbReference type="InterPro" id="IPR050481">
    <property type="entry name" value="UDP-glycosyltransf_plant"/>
</dbReference>
<dbReference type="InterPro" id="IPR002213">
    <property type="entry name" value="UDP_glucos_trans"/>
</dbReference>
<dbReference type="InterPro" id="IPR035595">
    <property type="entry name" value="UDP_glycos_trans_CS"/>
</dbReference>
<dbReference type="PANTHER" id="PTHR48048">
    <property type="entry name" value="GLYCOSYLTRANSFERASE"/>
    <property type="match status" value="1"/>
</dbReference>
<dbReference type="PANTHER" id="PTHR48048:SF76">
    <property type="entry name" value="UDP-GLYCOSYLTRANSFERASE 708D1-LIKE"/>
    <property type="match status" value="1"/>
</dbReference>
<dbReference type="Pfam" id="PF00201">
    <property type="entry name" value="UDPGT"/>
    <property type="match status" value="1"/>
</dbReference>
<dbReference type="SUPFAM" id="SSF53756">
    <property type="entry name" value="UDP-Glycosyltransferase/glycogen phosphorylase"/>
    <property type="match status" value="1"/>
</dbReference>
<dbReference type="PROSITE" id="PS00375">
    <property type="entry name" value="UDPGT"/>
    <property type="match status" value="1"/>
</dbReference>
<comment type="function">
    <text evidence="3">UDP-glucose-dependent glucosyltransferase catalyzing the c-glucosylation of 2-hydroxyflavanones. Acts preferentially on the dibenzoylmethane tautomers formed in equilibrium with 2-hydroxyflavanones. No activity with naringenin or naringenin chalcone.</text>
</comment>
<comment type="catalytic activity">
    <reaction evidence="3">
        <text>a 3'-hydro-2'-hydroxy-beta-oxodihydrochalcone + UDP-alpha-D-glucose = a 3'-(beta-D-glucopyranosyl)-2'-hydroxy-beta-oxodihydrochalcone + UDP + H(+)</text>
        <dbReference type="Rhea" id="RHEA:51504"/>
        <dbReference type="ChEBI" id="CHEBI:15378"/>
        <dbReference type="ChEBI" id="CHEBI:58223"/>
        <dbReference type="ChEBI" id="CHEBI:58885"/>
        <dbReference type="ChEBI" id="CHEBI:142482"/>
        <dbReference type="ChEBI" id="CHEBI:142483"/>
        <dbReference type="EC" id="2.4.1.360"/>
    </reaction>
    <physiologicalReaction direction="left-to-right" evidence="3">
        <dbReference type="Rhea" id="RHEA:51505"/>
    </physiologicalReaction>
</comment>
<comment type="biophysicochemical properties">
    <kinetics>
        <KM evidence="3">16.5 uM for 2,5,7-trihydroxyflavanone</KM>
        <KM evidence="3">8.3 uM for 2',4',6'-trihydroxydihydrochalcone</KM>
        <KM evidence="3">2.5 uM for 2-hydroxynaringenin</KM>
        <KM evidence="3">4.78 uM for phoretin</KM>
        <KM evidence="3">8 uM for 2,4,6-trihydroxybenzophenone</KM>
        <text evidence="3">kcat is 0.76 sec(-1) with 2,5,7-trihydroxyflavanone as substrate. kcat is 3.13 sec(-1) with 2-hydroxynaringenin as substrate. kcat is 0.75 sec(-1) with 2',4',6'-trihydroxydihydrochalcone as substrate. kcat is 10.84 sec(-1) with phoretin as substrate. kcat is 0.11 sec(-1) with 2,4,6-trihydroxybenzophenone as substrate.</text>
    </kinetics>
</comment>
<comment type="similarity">
    <text evidence="5">Belongs to the UDP-glycosyltransferase family.</text>
</comment>
<keyword id="KW-0328">Glycosyltransferase</keyword>
<keyword id="KW-0808">Transferase</keyword>
<evidence type="ECO:0000250" key="1">
    <source>
        <dbReference type="UniProtKB" id="A0A0A1HA03"/>
    </source>
</evidence>
<evidence type="ECO:0000250" key="2">
    <source>
        <dbReference type="UniProtKB" id="P51094"/>
    </source>
</evidence>
<evidence type="ECO:0000269" key="3">
    <source>
    </source>
</evidence>
<evidence type="ECO:0000303" key="4">
    <source>
    </source>
</evidence>
<evidence type="ECO:0000305" key="5"/>
<evidence type="ECO:0000312" key="6">
    <source>
        <dbReference type="EMBL" id="ABC94602.1"/>
    </source>
</evidence>
<feature type="chain" id="PRO_0000436256" description="UDP-glycosyltransferase CGT">
    <location>
        <begin position="1"/>
        <end position="471"/>
    </location>
</feature>
<feature type="region of interest" description="UDP" evidence="1">
    <location>
        <begin position="280"/>
        <end position="281"/>
    </location>
</feature>
<feature type="active site" description="Proton acceptor" evidence="1">
    <location>
        <position position="24"/>
    </location>
</feature>
<feature type="active site" description="Charge relay" evidence="1">
    <location>
        <position position="120"/>
    </location>
</feature>
<feature type="binding site" evidence="2">
    <location>
        <position position="24"/>
    </location>
    <ligand>
        <name>an anthocyanidin</name>
        <dbReference type="ChEBI" id="CHEBI:143576"/>
    </ligand>
</feature>
<feature type="binding site" evidence="1">
    <location>
        <position position="143"/>
    </location>
    <ligand>
        <name>UDP-alpha-D-glucose</name>
        <dbReference type="ChEBI" id="CHEBI:58885"/>
    </ligand>
</feature>
<feature type="binding site" evidence="1">
    <location>
        <position position="343"/>
    </location>
    <ligand>
        <name>UDP-alpha-D-glucose</name>
        <dbReference type="ChEBI" id="CHEBI:58885"/>
    </ligand>
</feature>
<feature type="binding site" evidence="1">
    <location>
        <position position="345"/>
    </location>
    <ligand>
        <name>UDP-alpha-D-glucose</name>
        <dbReference type="ChEBI" id="CHEBI:58885"/>
    </ligand>
</feature>
<feature type="binding site" evidence="1">
    <location>
        <position position="360"/>
    </location>
    <ligand>
        <name>UDP-alpha-D-glucose</name>
        <dbReference type="ChEBI" id="CHEBI:58885"/>
    </ligand>
</feature>
<feature type="binding site" evidence="1">
    <location>
        <position position="363"/>
    </location>
    <ligand>
        <name>UDP-alpha-D-glucose</name>
        <dbReference type="ChEBI" id="CHEBI:58885"/>
    </ligand>
</feature>
<feature type="binding site" evidence="1">
    <location>
        <position position="364"/>
    </location>
    <ligand>
        <name>UDP-alpha-D-glucose</name>
        <dbReference type="ChEBI" id="CHEBI:58885"/>
    </ligand>
</feature>
<feature type="binding site" evidence="1">
    <location>
        <position position="365"/>
    </location>
    <ligand>
        <name>UDP-alpha-D-glucose</name>
        <dbReference type="ChEBI" id="CHEBI:58885"/>
    </ligand>
</feature>
<feature type="binding site" evidence="1">
    <location>
        <position position="368"/>
    </location>
    <ligand>
        <name>UDP-alpha-D-glucose</name>
        <dbReference type="ChEBI" id="CHEBI:58885"/>
    </ligand>
</feature>
<feature type="binding site" evidence="2">
    <location>
        <position position="383"/>
    </location>
    <ligand>
        <name>an anthocyanidin</name>
        <dbReference type="ChEBI" id="CHEBI:143576"/>
    </ligand>
</feature>
<feature type="binding site" evidence="1">
    <location>
        <position position="384"/>
    </location>
    <ligand>
        <name>UDP-alpha-D-glucose</name>
        <dbReference type="ChEBI" id="CHEBI:58885"/>
    </ligand>
</feature>
<feature type="binding site" evidence="1">
    <location>
        <position position="385"/>
    </location>
    <ligand>
        <name>UDP-alpha-D-glucose</name>
        <dbReference type="ChEBI" id="CHEBI:58885"/>
    </ligand>
</feature>
<feature type="sequence conflict" description="In Ref. 1; ABC94602." evidence="5" ref="1">
    <original>D</original>
    <variation>G</variation>
    <location>
        <position position="325"/>
    </location>
</feature>
<protein>
    <recommendedName>
        <fullName evidence="5">UDP-glycosyltransferase CGT</fullName>
        <ecNumber evidence="3">2.4.1.360</ecNumber>
    </recommendedName>
    <alternativeName>
        <fullName evidence="4">UDP-glucose:2-hydroxyflavanone C-glucosyltransferase</fullName>
        <shortName evidence="4">OsCGT</shortName>
    </alternativeName>
</protein>
<accession>C3W7B0</accession>
<accession>A1XFD9</accession>
<gene>
    <name evidence="4" type="primary">CGT</name>
    <name evidence="6" type="ORF">Pi2_C101A51.16</name>
</gene>
<reference key="1">
    <citation type="journal article" date="2006" name="Mol. Plant Microbe Interact.">
        <title>The eight amino-acid differences within three leucine-rich repeats between Pi2 and Piz-t resistance proteins determine the resistance specificity to Magnaporthe grisea.</title>
        <authorList>
            <person name="Zhou B."/>
            <person name="Qu S."/>
            <person name="Liu G."/>
            <person name="Dolan M."/>
            <person name="Sakai H."/>
            <person name="Lu G."/>
            <person name="Bellizzi M."/>
            <person name="Wang G.L."/>
        </authorList>
    </citation>
    <scope>NUCLEOTIDE SEQUENCE [GENOMIC DNA]</scope>
</reference>
<reference key="2">
    <citation type="journal article" date="2009" name="J. Biol. Chem.">
        <title>The C-glycosylation of flavonoids in cereals.</title>
        <authorList>
            <person name="Brazier-Hicks M."/>
            <person name="Evans K.M."/>
            <person name="Gershater M.C."/>
            <person name="Puschmann H."/>
            <person name="Steel P.G."/>
            <person name="Edwards R."/>
        </authorList>
    </citation>
    <scope>NUCLEOTIDE SEQUENCE [GENOMIC DNA]</scope>
    <scope>FUNCTION</scope>
    <scope>CATALYTIC ACTIVITY</scope>
    <scope>BIOPHYSICOCHEMICAL PROPERTIES</scope>
</reference>
<sequence length="471" mass="49431">MPSSGDAAGRRPHVVLIPSAGMGHLVPFGRLAVALSSGHGCDVSLVTVLPTVSTAESKHLDALFDAFPAVRRLDFELAPFDASEFPGADPFFLRFEAMRRSAPLLGPLLTGAGASALATDIALTSVVIPVAKEQGLPCHILFTASAAMLSLCAYFPTYLDANAGGGGGVGDVDIPGVYRIPKASIPQALHDPNHLFTRQFVANGRSLTSAAGILVNTFDALEPEAVAALQQGKVASGFPPVFAVGPLLPASNQAKDPQANYMEWLDAQPARSVVYVSFGSRKAISREQLRELAAGLEGSGHRFLWVVKSTVVDRDDAAELGELLDEGFLERVEKRGLVTKAWVDQEEVLKHESVALFVSHCGWNSVTEAAASGVPVLALPRFGDQRVNSGVVARAGLGVWADTWSWEGEAGVIGAEEISEKVKAAMADEALRMKAASLAEAAAKAVAGGGSSHRCLAEFARLCQGGTCRTN</sequence>
<proteinExistence type="evidence at protein level"/>